<protein>
    <recommendedName>
        <fullName>Uncharacterized protein YiiG</fullName>
    </recommendedName>
</protein>
<keyword id="KW-1185">Reference proteome</keyword>
<feature type="chain" id="PRO_0000169686" description="Uncharacterized protein YiiG">
    <location>
        <begin position="1"/>
        <end position="351"/>
    </location>
</feature>
<feature type="region of interest" description="Disordered" evidence="1">
    <location>
        <begin position="25"/>
        <end position="67"/>
    </location>
</feature>
<feature type="compositionally biased region" description="Low complexity" evidence="1">
    <location>
        <begin position="33"/>
        <end position="55"/>
    </location>
</feature>
<evidence type="ECO:0000256" key="1">
    <source>
        <dbReference type="SAM" id="MobiDB-lite"/>
    </source>
</evidence>
<organism>
    <name type="scientific">Escherichia coli (strain K12)</name>
    <dbReference type="NCBI Taxonomy" id="83333"/>
    <lineage>
        <taxon>Bacteria</taxon>
        <taxon>Pseudomonadati</taxon>
        <taxon>Pseudomonadota</taxon>
        <taxon>Gammaproteobacteria</taxon>
        <taxon>Enterobacterales</taxon>
        <taxon>Enterobacteriaceae</taxon>
        <taxon>Escherichia</taxon>
    </lineage>
</organism>
<accession>P32151</accession>
<accession>Q2M8J3</accession>
<gene>
    <name type="primary">yiiG</name>
    <name type="ordered locus">b3896</name>
    <name type="ordered locus">JW3867</name>
</gene>
<sequence>MKRNLLSSAIIVAIMSLGLTGCDDKKAETETLPPANSQPAAPAPEAKPTEAPVAKAEAKPETPAQPVVDEQAVFDEKMDVYIKCYNKLQIPVQRSLARYADWLKDFKQGPTGEERTVYGIYGISESNLAECEKGVKSAVALTPALQPIDGVAVSYIDAAVALGNTINEMDKYYTQENYKDDAFAKGKTLHQTFLKNLEAFEPVAESYHAAIQEINDKRQLAELKNIEEREGKTFHYYSLAVMISAKQINNLISQDKFDAEAAMKKVSELETLVAQAKEADKGGMNFSFINSAGQYQLEAKKYVRRIRDKVPYSDWDKEQLQDANSSWMVEDSFPRALREYNEMVDDYNSLR</sequence>
<proteinExistence type="predicted"/>
<reference key="1">
    <citation type="journal article" date="1993" name="Nucleic Acids Res.">
        <title>Analysis of the Escherichia coli genome. III. DNA sequence of the region from 87.2 to 89.2 minutes.</title>
        <authorList>
            <person name="Plunkett G. III"/>
            <person name="Burland V."/>
            <person name="Daniels D.L."/>
            <person name="Blattner F.R."/>
        </authorList>
    </citation>
    <scope>NUCLEOTIDE SEQUENCE [LARGE SCALE GENOMIC DNA]</scope>
    <source>
        <strain>K12 / MG1655 / ATCC 47076</strain>
    </source>
</reference>
<reference key="2">
    <citation type="journal article" date="1997" name="Science">
        <title>The complete genome sequence of Escherichia coli K-12.</title>
        <authorList>
            <person name="Blattner F.R."/>
            <person name="Plunkett G. III"/>
            <person name="Bloch C.A."/>
            <person name="Perna N.T."/>
            <person name="Burland V."/>
            <person name="Riley M."/>
            <person name="Collado-Vides J."/>
            <person name="Glasner J.D."/>
            <person name="Rode C.K."/>
            <person name="Mayhew G.F."/>
            <person name="Gregor J."/>
            <person name="Davis N.W."/>
            <person name="Kirkpatrick H.A."/>
            <person name="Goeden M.A."/>
            <person name="Rose D.J."/>
            <person name="Mau B."/>
            <person name="Shao Y."/>
        </authorList>
    </citation>
    <scope>NUCLEOTIDE SEQUENCE [LARGE SCALE GENOMIC DNA]</scope>
    <source>
        <strain>K12 / MG1655 / ATCC 47076</strain>
    </source>
</reference>
<reference key="3">
    <citation type="journal article" date="2006" name="Mol. Syst. Biol.">
        <title>Highly accurate genome sequences of Escherichia coli K-12 strains MG1655 and W3110.</title>
        <authorList>
            <person name="Hayashi K."/>
            <person name="Morooka N."/>
            <person name="Yamamoto Y."/>
            <person name="Fujita K."/>
            <person name="Isono K."/>
            <person name="Choi S."/>
            <person name="Ohtsubo E."/>
            <person name="Baba T."/>
            <person name="Wanner B.L."/>
            <person name="Mori H."/>
            <person name="Horiuchi T."/>
        </authorList>
    </citation>
    <scope>NUCLEOTIDE SEQUENCE [LARGE SCALE GENOMIC DNA]</scope>
    <source>
        <strain>K12 / W3110 / ATCC 27325 / DSM 5911</strain>
    </source>
</reference>
<dbReference type="EMBL" id="L19201">
    <property type="protein sequence ID" value="AAB03029.1"/>
    <property type="molecule type" value="Genomic_DNA"/>
</dbReference>
<dbReference type="EMBL" id="U00096">
    <property type="protein sequence ID" value="AAC76878.1"/>
    <property type="molecule type" value="Genomic_DNA"/>
</dbReference>
<dbReference type="EMBL" id="AP009048">
    <property type="protein sequence ID" value="BAE77413.1"/>
    <property type="molecule type" value="Genomic_DNA"/>
</dbReference>
<dbReference type="PIR" id="S40840">
    <property type="entry name" value="S40840"/>
</dbReference>
<dbReference type="RefSeq" id="NP_418332.1">
    <property type="nucleotide sequence ID" value="NC_000913.3"/>
</dbReference>
<dbReference type="RefSeq" id="WP_001295677.1">
    <property type="nucleotide sequence ID" value="NZ_SSZK01000026.1"/>
</dbReference>
<dbReference type="SMR" id="P32151"/>
<dbReference type="BioGRID" id="4263327">
    <property type="interactions" value="11"/>
</dbReference>
<dbReference type="FunCoup" id="P32151">
    <property type="interactions" value="3"/>
</dbReference>
<dbReference type="IntAct" id="P32151">
    <property type="interactions" value="2"/>
</dbReference>
<dbReference type="STRING" id="511145.b3896"/>
<dbReference type="PaxDb" id="511145-b3896"/>
<dbReference type="EnsemblBacteria" id="AAC76878">
    <property type="protein sequence ID" value="AAC76878"/>
    <property type="gene ID" value="b3896"/>
</dbReference>
<dbReference type="GeneID" id="948392"/>
<dbReference type="KEGG" id="ecj:JW3867"/>
<dbReference type="KEGG" id="eco:b3896"/>
<dbReference type="KEGG" id="ecoc:C3026_21065"/>
<dbReference type="PATRIC" id="fig|1411691.4.peg.2811"/>
<dbReference type="EchoBASE" id="EB1806"/>
<dbReference type="eggNOG" id="ENOG5030R7T">
    <property type="taxonomic scope" value="Bacteria"/>
</dbReference>
<dbReference type="HOGENOM" id="CLU_070564_0_0_6"/>
<dbReference type="InParanoid" id="P32151"/>
<dbReference type="OMA" id="ECFNSTH"/>
<dbReference type="OrthoDB" id="8004422at2"/>
<dbReference type="PhylomeDB" id="P32151"/>
<dbReference type="BioCyc" id="EcoCyc:EG11860-MONOMER"/>
<dbReference type="PRO" id="PR:P32151"/>
<dbReference type="Proteomes" id="UP000000625">
    <property type="component" value="Chromosome"/>
</dbReference>
<dbReference type="InterPro" id="IPR024291">
    <property type="entry name" value="DUF3829"/>
</dbReference>
<dbReference type="Pfam" id="PF12889">
    <property type="entry name" value="DUF3829"/>
    <property type="match status" value="1"/>
</dbReference>
<dbReference type="PROSITE" id="PS51257">
    <property type="entry name" value="PROKAR_LIPOPROTEIN"/>
    <property type="match status" value="1"/>
</dbReference>
<name>YIIG_ECOLI</name>